<organism>
    <name type="scientific">Zea mays</name>
    <name type="common">Maize</name>
    <dbReference type="NCBI Taxonomy" id="4577"/>
    <lineage>
        <taxon>Eukaryota</taxon>
        <taxon>Viridiplantae</taxon>
        <taxon>Streptophyta</taxon>
        <taxon>Embryophyta</taxon>
        <taxon>Tracheophyta</taxon>
        <taxon>Spermatophyta</taxon>
        <taxon>Magnoliopsida</taxon>
        <taxon>Liliopsida</taxon>
        <taxon>Poales</taxon>
        <taxon>Poaceae</taxon>
        <taxon>PACMAD clade</taxon>
        <taxon>Panicoideae</taxon>
        <taxon>Andropogonodae</taxon>
        <taxon>Andropogoneae</taxon>
        <taxon>Tripsacinae</taxon>
        <taxon>Zea</taxon>
    </lineage>
</organism>
<comment type="function">
    <text evidence="3">The alpha subunit is responsible for the aldol cleavage of indoleglycerol phosphate to indole and glyceraldehyde 3-phosphate. In bacteria, tryptophan synthase alpha (TSA) activity is almost completely dependent on formation of an active alpha2beta2 complex with tryptophan synthase beta (TSB), and indole is usually not released during tryptophan synthesis. In maize, the TSA homolog BX1 catalyzes the formation of free indole from indole-3-glycerol phosphate, independently of TSB.</text>
</comment>
<comment type="catalytic activity">
    <reaction evidence="6">
        <text>(1S,2R)-1-C-(indol-3-yl)glycerol 3-phosphate = indole + D-glyceraldehyde 3-phosphate</text>
        <dbReference type="Rhea" id="RHEA:14081"/>
        <dbReference type="ChEBI" id="CHEBI:16881"/>
        <dbReference type="ChEBI" id="CHEBI:58866"/>
        <dbReference type="ChEBI" id="CHEBI:59776"/>
        <dbReference type="EC" id="4.1.2.8"/>
    </reaction>
    <physiologicalReaction direction="left-to-right" evidence="6">
        <dbReference type="Rhea" id="RHEA:14082"/>
    </physiologicalReaction>
</comment>
<comment type="catalytic activity">
    <reaction>
        <text>(1S,2R)-1-C-(indol-3-yl)glycerol 3-phosphate + L-serine = D-glyceraldehyde 3-phosphate + L-tryptophan + H2O</text>
        <dbReference type="Rhea" id="RHEA:10532"/>
        <dbReference type="ChEBI" id="CHEBI:15377"/>
        <dbReference type="ChEBI" id="CHEBI:33384"/>
        <dbReference type="ChEBI" id="CHEBI:57912"/>
        <dbReference type="ChEBI" id="CHEBI:58866"/>
        <dbReference type="ChEBI" id="CHEBI:59776"/>
        <dbReference type="EC" id="4.2.1.20"/>
    </reaction>
</comment>
<comment type="biophysicochemical properties">
    <kinetics>
        <KM evidence="3">0.013 mM for indole-3-glycerol phosphate</KM>
        <text evidence="3">kcat is 0.02 sec(-1) with indole-3-glycerol phosphate as substrate.</text>
    </kinetics>
</comment>
<comment type="pathway">
    <text>Secondary metabolite biosynthesis; 2,4-dihydroxy-1,4-benzoxazin-3-one biosynthesis; 2,4-dihydroxy-1,4-benzoxazin-3-one from indoleglycerol phosphate: step 1/5.</text>
</comment>
<comment type="pathway">
    <text>Amino-acid biosynthesis; L-tryptophan biosynthesis; L-tryptophan from chorismate: step 5/5.</text>
</comment>
<comment type="subunit">
    <text evidence="4">Tetramer of two alpha and two beta chains for the tryptophan synthase activity. Homodimer of alpha chains for the indole-3-glycerol phosphate lyase activity.</text>
</comment>
<comment type="subcellular location">
    <subcellularLocation>
        <location evidence="5">Plastid</location>
        <location evidence="5">Chloroplast</location>
    </subcellularLocation>
</comment>
<comment type="miscellaneous">
    <text>Mutant rescue experiments indicate the existence of a second tryptophan synthase alpha gene whose product might be involved in tryptophan biosynthesis while BX1 might be restricted to free indol production.</text>
</comment>
<comment type="similarity">
    <text evidence="5">Belongs to the TrpA family.</text>
</comment>
<comment type="sequence caution" evidence="5">
    <conflict type="frameshift">
        <sequence resource="EMBL-CDS" id="CAA54131"/>
    </conflict>
</comment>
<name>TRPA_MAIZE</name>
<feature type="transit peptide" description="Chloroplast" evidence="1">
    <location>
        <begin position="1"/>
        <end position="53"/>
    </location>
</feature>
<feature type="chain" id="PRO_0000035782" description="Indole-3-glycerol phosphate lyase, chloroplastic">
    <location>
        <begin position="54"/>
        <end position="347"/>
    </location>
</feature>
<feature type="region of interest" description="Disordered" evidence="2">
    <location>
        <begin position="1"/>
        <end position="38"/>
    </location>
</feature>
<feature type="region of interest" description="Disordered" evidence="2">
    <location>
        <begin position="64"/>
        <end position="89"/>
    </location>
</feature>
<feature type="compositionally biased region" description="Low complexity" evidence="2">
    <location>
        <begin position="8"/>
        <end position="27"/>
    </location>
</feature>
<feature type="compositionally biased region" description="Pro residues" evidence="2">
    <location>
        <begin position="64"/>
        <end position="76"/>
    </location>
</feature>
<feature type="helix" evidence="7">
    <location>
        <begin position="90"/>
        <end position="99"/>
    </location>
</feature>
<feature type="strand" evidence="7">
    <location>
        <begin position="104"/>
        <end position="110"/>
    </location>
</feature>
<feature type="helix" evidence="7">
    <location>
        <begin position="116"/>
        <end position="128"/>
    </location>
</feature>
<feature type="strand" evidence="7">
    <location>
        <begin position="132"/>
        <end position="137"/>
    </location>
</feature>
<feature type="helix" evidence="7">
    <location>
        <begin position="148"/>
        <end position="158"/>
    </location>
</feature>
<feature type="turn" evidence="7">
    <location>
        <begin position="159"/>
        <end position="161"/>
    </location>
</feature>
<feature type="helix" evidence="7">
    <location>
        <begin position="164"/>
        <end position="174"/>
    </location>
</feature>
<feature type="helix" evidence="7">
    <location>
        <begin position="175"/>
        <end position="177"/>
    </location>
</feature>
<feature type="strand" evidence="7">
    <location>
        <begin position="182"/>
        <end position="185"/>
    </location>
</feature>
<feature type="helix" evidence="7">
    <location>
        <begin position="189"/>
        <end position="192"/>
    </location>
</feature>
<feature type="helix" evidence="7">
    <location>
        <begin position="197"/>
        <end position="201"/>
    </location>
</feature>
<feature type="strand" evidence="7">
    <location>
        <begin position="206"/>
        <end position="208"/>
    </location>
</feature>
<feature type="turn" evidence="7">
    <location>
        <begin position="214"/>
        <end position="216"/>
    </location>
</feature>
<feature type="helix" evidence="7">
    <location>
        <begin position="217"/>
        <end position="226"/>
    </location>
</feature>
<feature type="strand" evidence="7">
    <location>
        <begin position="233"/>
        <end position="235"/>
    </location>
</feature>
<feature type="helix" evidence="7">
    <location>
        <begin position="241"/>
        <end position="250"/>
    </location>
</feature>
<feature type="strand" evidence="7">
    <location>
        <begin position="255"/>
        <end position="258"/>
    </location>
</feature>
<feature type="helix" evidence="7">
    <location>
        <begin position="273"/>
        <end position="284"/>
    </location>
</feature>
<feature type="strand" evidence="7">
    <location>
        <begin position="289"/>
        <end position="293"/>
    </location>
</feature>
<feature type="helix" evidence="7">
    <location>
        <begin position="298"/>
        <end position="306"/>
    </location>
</feature>
<feature type="strand" evidence="7">
    <location>
        <begin position="310"/>
        <end position="314"/>
    </location>
</feature>
<feature type="helix" evidence="7">
    <location>
        <begin position="316"/>
        <end position="323"/>
    </location>
</feature>
<feature type="strand" evidence="7">
    <location>
        <begin position="324"/>
        <end position="327"/>
    </location>
</feature>
<feature type="helix" evidence="7">
    <location>
        <begin position="328"/>
        <end position="346"/>
    </location>
</feature>
<reference key="1">
    <citation type="journal article" date="1995" name="Plant Mol. Biol.">
        <title>Structure of a maize tryptophan synthase alpha subunit gene with pith enhanced expression.</title>
        <authorList>
            <person name="Kramer V.C."/>
            <person name="Koziel M.G."/>
        </authorList>
    </citation>
    <scope>NUCLEOTIDE SEQUENCE [GENOMIC DNA]</scope>
    <source>
        <strain>cv. CG000237</strain>
    </source>
</reference>
<reference key="2">
    <citation type="submission" date="2003-03" db="EMBL/GenBank/DDBJ databases">
        <title>Transformation of Nicotiana tabacum cv. Samsun with melanin and indigo genes.</title>
        <authorList>
            <person name="Jordaan A."/>
            <person name="Botha A.-M."/>
        </authorList>
    </citation>
    <scope>NUCLEOTIDE SEQUENCE [MRNA]</scope>
</reference>
<reference key="3">
    <citation type="journal article" date="1997" name="Science">
        <title>Analysis of a chemical plant defense mechanism in grasses.</title>
        <authorList>
            <person name="Frey M."/>
            <person name="Chomet P."/>
            <person name="Glawischnig E."/>
            <person name="Stettner C."/>
            <person name="Grun S."/>
            <person name="Winklmair A."/>
            <person name="Eisenreich W."/>
            <person name="Bacher A."/>
            <person name="Meeley R.B."/>
            <person name="Briggs S.P."/>
            <person name="Simcox K."/>
            <person name="Gierl A."/>
        </authorList>
    </citation>
    <scope>FUNCTION</scope>
    <scope>CATALYTIC ACTIVITY</scope>
    <scope>BIOPHYSICOCHEMICAL PROPERTIES</scope>
</reference>
<reference key="4">
    <citation type="submission" date="2004-12" db="PDB data bank">
        <title>Crystal structure of tryptophan synthase alpha chain.</title>
        <authorList>
            <person name="Kulik V."/>
            <person name="Weyand M."/>
            <person name="Frey M."/>
            <person name="Dunn M."/>
            <person name="Schlichting I."/>
        </authorList>
    </citation>
    <scope>X-RAY CRYSTALLOGRAPHY (2.02 ANGSTROMS) OF 86-347</scope>
    <scope>SUBUNIT</scope>
</reference>
<accession>P42390</accession>
<accession>Q84K75</accession>
<gene>
    <name type="primary">BX1</name>
</gene>
<protein>
    <recommendedName>
        <fullName>Indole-3-glycerol phosphate lyase, chloroplastic</fullName>
        <ecNumber evidence="6">4.1.2.8</ecNumber>
    </recommendedName>
    <alternativeName>
        <fullName>Benzoxazineless 1</fullName>
    </alternativeName>
    <alternativeName>
        <fullName>Indole synthase</fullName>
    </alternativeName>
    <alternativeName>
        <fullName>Tryptophan synthase alpha chain</fullName>
        <ecNumber>4.2.1.20</ecNumber>
    </alternativeName>
</protein>
<keyword id="KW-0002">3D-structure</keyword>
<keyword id="KW-0028">Amino-acid biosynthesis</keyword>
<keyword id="KW-0057">Aromatic amino acid biosynthesis</keyword>
<keyword id="KW-0150">Chloroplast</keyword>
<keyword id="KW-0456">Lyase</keyword>
<keyword id="KW-0934">Plastid</keyword>
<keyword id="KW-1185">Reference proteome</keyword>
<keyword id="KW-0809">Transit peptide</keyword>
<keyword id="KW-0822">Tryptophan biosynthesis</keyword>
<dbReference type="EC" id="4.1.2.8" evidence="6"/>
<dbReference type="EC" id="4.2.1.20"/>
<dbReference type="EMBL" id="X76713">
    <property type="protein sequence ID" value="CAA54131.1"/>
    <property type="status" value="ALT_FRAME"/>
    <property type="molecule type" value="Genomic_DNA"/>
</dbReference>
<dbReference type="EMBL" id="AY254103">
    <property type="protein sequence ID" value="AAP33667.1"/>
    <property type="molecule type" value="mRNA"/>
</dbReference>
<dbReference type="EMBL" id="AY254104">
    <property type="protein sequence ID" value="AAP33668.1"/>
    <property type="molecule type" value="mRNA"/>
</dbReference>
<dbReference type="PIR" id="S56665">
    <property type="entry name" value="S56665"/>
</dbReference>
<dbReference type="RefSeq" id="NP_001105219.1">
    <property type="nucleotide sequence ID" value="NM_001111749.1"/>
</dbReference>
<dbReference type="PDB" id="1RD5">
    <property type="method" value="X-ray"/>
    <property type="resolution" value="2.02 A"/>
    <property type="chains" value="A/B=87-347"/>
</dbReference>
<dbReference type="PDB" id="1TJR">
    <property type="method" value="X-ray"/>
    <property type="resolution" value="2.30 A"/>
    <property type="chains" value="A/B=87-347"/>
</dbReference>
<dbReference type="PDBsum" id="1RD5"/>
<dbReference type="PDBsum" id="1TJR"/>
<dbReference type="SMR" id="P42390"/>
<dbReference type="STRING" id="4577.P42390"/>
<dbReference type="PaxDb" id="4577-GRMZM2G085381_P03"/>
<dbReference type="EnsemblPlants" id="Zm00001eb165610_T001">
    <property type="protein sequence ID" value="Zm00001eb165610_P001"/>
    <property type="gene ID" value="Zm00001eb165610"/>
</dbReference>
<dbReference type="GeneID" id="542117"/>
<dbReference type="Gramene" id="Zm00001eb165610_T001">
    <property type="protein sequence ID" value="Zm00001eb165610_P001"/>
    <property type="gene ID" value="Zm00001eb165610"/>
</dbReference>
<dbReference type="KEGG" id="zma:542117"/>
<dbReference type="MaizeGDB" id="102199"/>
<dbReference type="eggNOG" id="KOG4175">
    <property type="taxonomic scope" value="Eukaryota"/>
</dbReference>
<dbReference type="HOGENOM" id="CLU_016734_0_2_1"/>
<dbReference type="InParanoid" id="P42390"/>
<dbReference type="OMA" id="NINAHGQ"/>
<dbReference type="OrthoDB" id="10050244at2759"/>
<dbReference type="BioCyc" id="MetaCyc:MONOMER-10162"/>
<dbReference type="BRENDA" id="4.1.2.8">
    <property type="organism ID" value="6752"/>
</dbReference>
<dbReference type="SABIO-RK" id="P42390"/>
<dbReference type="UniPathway" id="UPA00035">
    <property type="reaction ID" value="UER00044"/>
</dbReference>
<dbReference type="UniPathway" id="UPA00872">
    <property type="reaction ID" value="UER00847"/>
</dbReference>
<dbReference type="EvolutionaryTrace" id="P42390"/>
<dbReference type="Proteomes" id="UP000007305">
    <property type="component" value="Chromosome 4"/>
</dbReference>
<dbReference type="ExpressionAtlas" id="P42390">
    <property type="expression patterns" value="baseline and differential"/>
</dbReference>
<dbReference type="GO" id="GO:0009507">
    <property type="term" value="C:chloroplast"/>
    <property type="evidence" value="ECO:0000318"/>
    <property type="project" value="GO_Central"/>
</dbReference>
<dbReference type="GO" id="GO:0005829">
    <property type="term" value="C:cytosol"/>
    <property type="evidence" value="ECO:0000318"/>
    <property type="project" value="GO_Central"/>
</dbReference>
<dbReference type="GO" id="GO:0033984">
    <property type="term" value="F:indole-3-glycerol-phosphate lyase activity"/>
    <property type="evidence" value="ECO:0007669"/>
    <property type="project" value="UniProtKB-EC"/>
</dbReference>
<dbReference type="GO" id="GO:0004834">
    <property type="term" value="F:tryptophan synthase activity"/>
    <property type="evidence" value="ECO:0000318"/>
    <property type="project" value="GO_Central"/>
</dbReference>
<dbReference type="GO" id="GO:0000162">
    <property type="term" value="P:L-tryptophan biosynthetic process"/>
    <property type="evidence" value="ECO:0000318"/>
    <property type="project" value="GO_Central"/>
</dbReference>
<dbReference type="CDD" id="cd04724">
    <property type="entry name" value="Tryptophan_synthase_alpha"/>
    <property type="match status" value="1"/>
</dbReference>
<dbReference type="FunFam" id="3.20.20.70:FF:000107">
    <property type="entry name" value="Tryptophan synthase alpha chain, chloroplastic"/>
    <property type="match status" value="1"/>
</dbReference>
<dbReference type="Gene3D" id="3.20.20.70">
    <property type="entry name" value="Aldolase class I"/>
    <property type="match status" value="1"/>
</dbReference>
<dbReference type="HAMAP" id="MF_00131">
    <property type="entry name" value="Trp_synth_alpha"/>
    <property type="match status" value="1"/>
</dbReference>
<dbReference type="InterPro" id="IPR013785">
    <property type="entry name" value="Aldolase_TIM"/>
</dbReference>
<dbReference type="InterPro" id="IPR011060">
    <property type="entry name" value="RibuloseP-bd_barrel"/>
</dbReference>
<dbReference type="InterPro" id="IPR018204">
    <property type="entry name" value="Trp_synthase_alpha_AS"/>
</dbReference>
<dbReference type="InterPro" id="IPR002028">
    <property type="entry name" value="Trp_synthase_suA"/>
</dbReference>
<dbReference type="NCBIfam" id="TIGR00262">
    <property type="entry name" value="trpA"/>
    <property type="match status" value="1"/>
</dbReference>
<dbReference type="PANTHER" id="PTHR43406:SF7">
    <property type="entry name" value="INDOLE-3-GLYCEROL PHOSPHATE LYASE, CHLOROPLASTIC"/>
    <property type="match status" value="1"/>
</dbReference>
<dbReference type="PANTHER" id="PTHR43406">
    <property type="entry name" value="TRYPTOPHAN SYNTHASE, ALPHA CHAIN"/>
    <property type="match status" value="1"/>
</dbReference>
<dbReference type="Pfam" id="PF00290">
    <property type="entry name" value="Trp_syntA"/>
    <property type="match status" value="1"/>
</dbReference>
<dbReference type="SUPFAM" id="SSF51366">
    <property type="entry name" value="Ribulose-phoshate binding barrel"/>
    <property type="match status" value="1"/>
</dbReference>
<dbReference type="PROSITE" id="PS00167">
    <property type="entry name" value="TRP_SYNTHASE_ALPHA"/>
    <property type="match status" value="1"/>
</dbReference>
<proteinExistence type="evidence at protein level"/>
<sequence>MAFAPKTSSSSSLSSALQAAQSPPLLLRRMSSTATPRRRYDAAVVVTTTTTARAAAAAVTVPAAPPQAPAPAPVPPKQAAAPAERRSRPVSDTMAALMAKGKTAFIPYITAGDPDLATTAEALRLLDGCGADVIELGVPCSDPYIDGPIIQASVARALASGTTMDAVLEMLREVTPELSCPVVLLSYYKPIMSRSLAEMKEAGVHGLIVPDLPYVAAHSLWSEAKNNNLELVLLTTPAIPEDRMKEITKASEGFVYLVSVNGVTGPRANVNPRVESLIQEVKKVTNKPVAVGFGISKPEHVKQIAQWGADGVIIGSAMVRQLGEAASPKQGLRRLEEYARGMKNALP</sequence>
<evidence type="ECO:0000255" key="1"/>
<evidence type="ECO:0000256" key="2">
    <source>
        <dbReference type="SAM" id="MobiDB-lite"/>
    </source>
</evidence>
<evidence type="ECO:0000269" key="3">
    <source>
    </source>
</evidence>
<evidence type="ECO:0000269" key="4">
    <source ref="4"/>
</evidence>
<evidence type="ECO:0000305" key="5"/>
<evidence type="ECO:0000305" key="6">
    <source>
    </source>
</evidence>
<evidence type="ECO:0007829" key="7">
    <source>
        <dbReference type="PDB" id="1RD5"/>
    </source>
</evidence>